<reference key="1">
    <citation type="journal article" date="2009" name="Proc. Natl. Acad. Sci. U.S.A.">
        <title>Biogeography of the Sulfolobus islandicus pan-genome.</title>
        <authorList>
            <person name="Reno M.L."/>
            <person name="Held N.L."/>
            <person name="Fields C.J."/>
            <person name="Burke P.V."/>
            <person name="Whitaker R.J."/>
        </authorList>
    </citation>
    <scope>NUCLEOTIDE SEQUENCE [LARGE SCALE GENOMIC DNA]</scope>
    <source>
        <strain>L.S.2.15 / Lassen #1</strain>
    </source>
</reference>
<dbReference type="EC" id="6.1.1.20" evidence="1"/>
<dbReference type="EMBL" id="CP001399">
    <property type="protein sequence ID" value="ACP36175.1"/>
    <property type="molecule type" value="Genomic_DNA"/>
</dbReference>
<dbReference type="RefSeq" id="WP_012714139.1">
    <property type="nucleotide sequence ID" value="NC_012589.1"/>
</dbReference>
<dbReference type="SMR" id="C3MJ88"/>
<dbReference type="GeneID" id="7798166"/>
<dbReference type="KEGG" id="sis:LS215_2188"/>
<dbReference type="HOGENOM" id="CLU_020279_3_0_2"/>
<dbReference type="OrthoDB" id="10073at2157"/>
<dbReference type="Proteomes" id="UP000001747">
    <property type="component" value="Chromosome"/>
</dbReference>
<dbReference type="GO" id="GO:0009328">
    <property type="term" value="C:phenylalanine-tRNA ligase complex"/>
    <property type="evidence" value="ECO:0007669"/>
    <property type="project" value="TreeGrafter"/>
</dbReference>
<dbReference type="GO" id="GO:0005524">
    <property type="term" value="F:ATP binding"/>
    <property type="evidence" value="ECO:0007669"/>
    <property type="project" value="UniProtKB-UniRule"/>
</dbReference>
<dbReference type="GO" id="GO:0000287">
    <property type="term" value="F:magnesium ion binding"/>
    <property type="evidence" value="ECO:0007669"/>
    <property type="project" value="InterPro"/>
</dbReference>
<dbReference type="GO" id="GO:0004826">
    <property type="term" value="F:phenylalanine-tRNA ligase activity"/>
    <property type="evidence" value="ECO:0007669"/>
    <property type="project" value="UniProtKB-UniRule"/>
</dbReference>
<dbReference type="GO" id="GO:0003723">
    <property type="term" value="F:RNA binding"/>
    <property type="evidence" value="ECO:0007669"/>
    <property type="project" value="InterPro"/>
</dbReference>
<dbReference type="GO" id="GO:0006432">
    <property type="term" value="P:phenylalanyl-tRNA aminoacylation"/>
    <property type="evidence" value="ECO:0007669"/>
    <property type="project" value="UniProtKB-UniRule"/>
</dbReference>
<dbReference type="CDD" id="cd00769">
    <property type="entry name" value="PheRS_beta_core"/>
    <property type="match status" value="1"/>
</dbReference>
<dbReference type="FunFam" id="3.30.56.10:FF:000014">
    <property type="entry name" value="Phenylalanine--tRNA ligase beta subunit"/>
    <property type="match status" value="1"/>
</dbReference>
<dbReference type="Gene3D" id="3.30.56.10">
    <property type="match status" value="2"/>
</dbReference>
<dbReference type="Gene3D" id="3.30.930.10">
    <property type="entry name" value="Bira Bifunctional Protein, Domain 2"/>
    <property type="match status" value="1"/>
</dbReference>
<dbReference type="Gene3D" id="3.50.40.10">
    <property type="entry name" value="Phenylalanyl-trna Synthetase, Chain B, domain 3"/>
    <property type="match status" value="1"/>
</dbReference>
<dbReference type="HAMAP" id="MF_00284">
    <property type="entry name" value="Phe_tRNA_synth_beta2"/>
    <property type="match status" value="1"/>
</dbReference>
<dbReference type="InterPro" id="IPR045864">
    <property type="entry name" value="aa-tRNA-synth_II/BPL/LPL"/>
</dbReference>
<dbReference type="InterPro" id="IPR005146">
    <property type="entry name" value="B3/B4_tRNA-bd"/>
</dbReference>
<dbReference type="InterPro" id="IPR009061">
    <property type="entry name" value="DNA-bd_dom_put_sf"/>
</dbReference>
<dbReference type="InterPro" id="IPR045060">
    <property type="entry name" value="Phe-tRNA-ligase_IIc_bsu"/>
</dbReference>
<dbReference type="InterPro" id="IPR004531">
    <property type="entry name" value="Phe-tRNA-synth_IIc_bsu_arc_euk"/>
</dbReference>
<dbReference type="InterPro" id="IPR020825">
    <property type="entry name" value="Phe-tRNA_synthase-like_B3/B4"/>
</dbReference>
<dbReference type="InterPro" id="IPR022918">
    <property type="entry name" value="Phe_tRNA_ligase_beta2_arc"/>
</dbReference>
<dbReference type="InterPro" id="IPR041616">
    <property type="entry name" value="PheRS_beta_core"/>
</dbReference>
<dbReference type="InterPro" id="IPR005147">
    <property type="entry name" value="tRNA_synthase_B5-dom"/>
</dbReference>
<dbReference type="NCBIfam" id="TIGR00471">
    <property type="entry name" value="pheT_arch"/>
    <property type="match status" value="1"/>
</dbReference>
<dbReference type="PANTHER" id="PTHR10947:SF0">
    <property type="entry name" value="PHENYLALANINE--TRNA LIGASE BETA SUBUNIT"/>
    <property type="match status" value="1"/>
</dbReference>
<dbReference type="PANTHER" id="PTHR10947">
    <property type="entry name" value="PHENYLALANYL-TRNA SYNTHETASE BETA CHAIN AND LEUCINE-RICH REPEAT-CONTAINING PROTEIN 47"/>
    <property type="match status" value="1"/>
</dbReference>
<dbReference type="Pfam" id="PF03483">
    <property type="entry name" value="B3_4"/>
    <property type="match status" value="1"/>
</dbReference>
<dbReference type="Pfam" id="PF03484">
    <property type="entry name" value="B5"/>
    <property type="match status" value="1"/>
</dbReference>
<dbReference type="Pfam" id="PF17759">
    <property type="entry name" value="tRNA_synthFbeta"/>
    <property type="match status" value="1"/>
</dbReference>
<dbReference type="SMART" id="SM00873">
    <property type="entry name" value="B3_4"/>
    <property type="match status" value="1"/>
</dbReference>
<dbReference type="SMART" id="SM00874">
    <property type="entry name" value="B5"/>
    <property type="match status" value="1"/>
</dbReference>
<dbReference type="SUPFAM" id="SSF55681">
    <property type="entry name" value="Class II aaRS and biotin synthetases"/>
    <property type="match status" value="1"/>
</dbReference>
<dbReference type="SUPFAM" id="SSF46955">
    <property type="entry name" value="Putative DNA-binding domain"/>
    <property type="match status" value="2"/>
</dbReference>
<dbReference type="PROSITE" id="PS51483">
    <property type="entry name" value="B5"/>
    <property type="match status" value="1"/>
</dbReference>
<protein>
    <recommendedName>
        <fullName evidence="1">Phenylalanine--tRNA ligase beta subunit</fullName>
        <ecNumber evidence="1">6.1.1.20</ecNumber>
    </recommendedName>
    <alternativeName>
        <fullName evidence="1">Phenylalanyl-tRNA synthetase beta subunit</fullName>
        <shortName evidence="1">PheRS</shortName>
    </alternativeName>
</protein>
<sequence length="545" mass="61714">MVTIVLNKYKLLDKIHIGQQKLEDLLFNLKSEVKPIDENNIEIEINADRLDLLSSDGIARAIKGLLEKELGEAKYNVTDTEYTLIVDNVRTRPYALAAIVYNAKIDLEELIQFQEKLHGTIGRKRKKVAIGIHDLRKVDSKTIEYKEVPLSYKFVPLYGNKELTISEILEKTEQGKLYGNISIANGVSPAIVQDDGEVLSIPPIINSNKTRLDENTKDFFIDVTGTSFEAVAQTLDIIVSNLAEAGGTIGRVKVLKSANSSQLSSPLFLHKIQNVREEYVKKILGIKTSKEEICKHVMRMRMNCDIENGVIRVTVPQYRVDILNEIDVVEDIAMSIGYNNLEPSKYISTNYGSYDYMTLLERKIRELGIGAGYVEISNFVLIKDEKLFSNKYVKILNPVTEEYNAVRNSLIPGLLDFLSKNQHAKFPIRVFETGDVVVYDSSTDTGFRNDKRAAYAIMDNKVSYEDIQAPIHYILKSLGLEVNYKEENNNIFIEGRSASIFYENEKMGVIGEVNPDVLIRFGIEYPAVIAELYISEIAKRLTNQR</sequence>
<evidence type="ECO:0000255" key="1">
    <source>
        <dbReference type="HAMAP-Rule" id="MF_00284"/>
    </source>
</evidence>
<proteinExistence type="inferred from homology"/>
<name>SYFB_SACI2</name>
<keyword id="KW-0030">Aminoacyl-tRNA synthetase</keyword>
<keyword id="KW-0067">ATP-binding</keyword>
<keyword id="KW-0963">Cytoplasm</keyword>
<keyword id="KW-0436">Ligase</keyword>
<keyword id="KW-0460">Magnesium</keyword>
<keyword id="KW-0479">Metal-binding</keyword>
<keyword id="KW-0547">Nucleotide-binding</keyword>
<keyword id="KW-0648">Protein biosynthesis</keyword>
<gene>
    <name evidence="1" type="primary">pheT</name>
    <name type="ordered locus">LS215_2188</name>
</gene>
<comment type="catalytic activity">
    <reaction evidence="1">
        <text>tRNA(Phe) + L-phenylalanine + ATP = L-phenylalanyl-tRNA(Phe) + AMP + diphosphate + H(+)</text>
        <dbReference type="Rhea" id="RHEA:19413"/>
        <dbReference type="Rhea" id="RHEA-COMP:9668"/>
        <dbReference type="Rhea" id="RHEA-COMP:9699"/>
        <dbReference type="ChEBI" id="CHEBI:15378"/>
        <dbReference type="ChEBI" id="CHEBI:30616"/>
        <dbReference type="ChEBI" id="CHEBI:33019"/>
        <dbReference type="ChEBI" id="CHEBI:58095"/>
        <dbReference type="ChEBI" id="CHEBI:78442"/>
        <dbReference type="ChEBI" id="CHEBI:78531"/>
        <dbReference type="ChEBI" id="CHEBI:456215"/>
        <dbReference type="EC" id="6.1.1.20"/>
    </reaction>
</comment>
<comment type="cofactor">
    <cofactor evidence="1">
        <name>Mg(2+)</name>
        <dbReference type="ChEBI" id="CHEBI:18420"/>
    </cofactor>
</comment>
<comment type="subunit">
    <text evidence="1">Tetramer of two alpha and two beta subunits.</text>
</comment>
<comment type="subcellular location">
    <subcellularLocation>
        <location evidence="1">Cytoplasm</location>
    </subcellularLocation>
</comment>
<comment type="similarity">
    <text evidence="1">Belongs to the phenylalanyl-tRNA synthetase beta subunit family. Type 2 subfamily.</text>
</comment>
<accession>C3MJ88</accession>
<feature type="chain" id="PRO_1000204844" description="Phenylalanine--tRNA ligase beta subunit">
    <location>
        <begin position="1"/>
        <end position="545"/>
    </location>
</feature>
<feature type="domain" description="B5" evidence="1">
    <location>
        <begin position="268"/>
        <end position="343"/>
    </location>
</feature>
<feature type="binding site" evidence="1">
    <location>
        <position position="321"/>
    </location>
    <ligand>
        <name>Mg(2+)</name>
        <dbReference type="ChEBI" id="CHEBI:18420"/>
        <note>shared with alpha subunit</note>
    </ligand>
</feature>
<feature type="binding site" evidence="1">
    <location>
        <position position="327"/>
    </location>
    <ligand>
        <name>Mg(2+)</name>
        <dbReference type="ChEBI" id="CHEBI:18420"/>
        <note>shared with alpha subunit</note>
    </ligand>
</feature>
<feature type="binding site" evidence="1">
    <location>
        <position position="330"/>
    </location>
    <ligand>
        <name>Mg(2+)</name>
        <dbReference type="ChEBI" id="CHEBI:18420"/>
        <note>shared with alpha subunit</note>
    </ligand>
</feature>
<feature type="binding site" evidence="1">
    <location>
        <position position="331"/>
    </location>
    <ligand>
        <name>Mg(2+)</name>
        <dbReference type="ChEBI" id="CHEBI:18420"/>
        <note>shared with alpha subunit</note>
    </ligand>
</feature>
<organism>
    <name type="scientific">Saccharolobus islandicus (strain L.S.2.15 / Lassen #1)</name>
    <name type="common">Sulfolobus islandicus</name>
    <dbReference type="NCBI Taxonomy" id="429572"/>
    <lineage>
        <taxon>Archaea</taxon>
        <taxon>Thermoproteota</taxon>
        <taxon>Thermoprotei</taxon>
        <taxon>Sulfolobales</taxon>
        <taxon>Sulfolobaceae</taxon>
        <taxon>Saccharolobus</taxon>
    </lineage>
</organism>